<evidence type="ECO:0000250" key="1"/>
<evidence type="ECO:0000255" key="2">
    <source>
        <dbReference type="PROSITE-ProRule" id="PRU00208"/>
    </source>
</evidence>
<evidence type="ECO:0000255" key="3">
    <source>
        <dbReference type="PROSITE-ProRule" id="PRU01024"/>
    </source>
</evidence>
<sequence length="453" mass="50611">MEASLLKKNQSIELTIEDLTHDGSGVGKIDGYPFFIPNTLPGEKVTAKIIKLNKNYGFARMENIETVSANRVEPPCAVYSKCGGCSLQHLSYDGQLEFKRNQVEETMKRIGKLNVEVPETLGMENPWRYRNKSQVPVGFVNGKLTAGFYQKRSHAIIDMSTCLIHNEQGDFAVQKTREILAKYGTEPYDEQTGKGDIRHIMTRFAHTTGQLMIVLVTTKERMPFKEEIVRDLVEQLELTSIVQNINPHKTNVIFGDRTKTLWGKDIIEDTIHGIRFAISARSFYQVNPLQTEVLYQQAIDAAELTGEETVIDAYCGIGSISLCLAKKAKHVYGVEIVDQAIQDARANAELNELANTTFETGKAEEVIPSWYKAGIVADVLVVDPPRKGCDEKLLETILAMKPKKVVYVSCNPGTLARDMKILTDGGYVAKKVQPVDMFPMTTHIEAVTVLHLN</sequence>
<reference key="1">
    <citation type="journal article" date="2001" name="Science">
        <title>Comparative genomics of Listeria species.</title>
        <authorList>
            <person name="Glaser P."/>
            <person name="Frangeul L."/>
            <person name="Buchrieser C."/>
            <person name="Rusniok C."/>
            <person name="Amend A."/>
            <person name="Baquero F."/>
            <person name="Berche P."/>
            <person name="Bloecker H."/>
            <person name="Brandt P."/>
            <person name="Chakraborty T."/>
            <person name="Charbit A."/>
            <person name="Chetouani F."/>
            <person name="Couve E."/>
            <person name="de Daruvar A."/>
            <person name="Dehoux P."/>
            <person name="Domann E."/>
            <person name="Dominguez-Bernal G."/>
            <person name="Duchaud E."/>
            <person name="Durant L."/>
            <person name="Dussurget O."/>
            <person name="Entian K.-D."/>
            <person name="Fsihi H."/>
            <person name="Garcia-del Portillo F."/>
            <person name="Garrido P."/>
            <person name="Gautier L."/>
            <person name="Goebel W."/>
            <person name="Gomez-Lopez N."/>
            <person name="Hain T."/>
            <person name="Hauf J."/>
            <person name="Jackson D."/>
            <person name="Jones L.-M."/>
            <person name="Kaerst U."/>
            <person name="Kreft J."/>
            <person name="Kuhn M."/>
            <person name="Kunst F."/>
            <person name="Kurapkat G."/>
            <person name="Madueno E."/>
            <person name="Maitournam A."/>
            <person name="Mata Vicente J."/>
            <person name="Ng E."/>
            <person name="Nedjari H."/>
            <person name="Nordsiek G."/>
            <person name="Novella S."/>
            <person name="de Pablos B."/>
            <person name="Perez-Diaz J.-C."/>
            <person name="Purcell R."/>
            <person name="Remmel B."/>
            <person name="Rose M."/>
            <person name="Schlueter T."/>
            <person name="Simoes N."/>
            <person name="Tierrez A."/>
            <person name="Vazquez-Boland J.-A."/>
            <person name="Voss H."/>
            <person name="Wehland J."/>
            <person name="Cossart P."/>
        </authorList>
    </citation>
    <scope>NUCLEOTIDE SEQUENCE [LARGE SCALE GENOMIC DNA]</scope>
    <source>
        <strain>ATCC BAA-679 / EGD-e</strain>
    </source>
</reference>
<proteinExistence type="inferred from homology"/>
<dbReference type="EC" id="2.1.1.-"/>
<dbReference type="EMBL" id="AL591981">
    <property type="protein sequence ID" value="CAC99829.1"/>
    <property type="molecule type" value="Genomic_DNA"/>
</dbReference>
<dbReference type="PIR" id="AG1293">
    <property type="entry name" value="AG1293"/>
</dbReference>
<dbReference type="RefSeq" id="NP_465276.1">
    <property type="nucleotide sequence ID" value="NC_003210.1"/>
</dbReference>
<dbReference type="SMR" id="Q8Y6D6"/>
<dbReference type="STRING" id="169963.gene:17594433"/>
<dbReference type="PaxDb" id="169963-lmo1751"/>
<dbReference type="EnsemblBacteria" id="CAC99829">
    <property type="protein sequence ID" value="CAC99829"/>
    <property type="gene ID" value="CAC99829"/>
</dbReference>
<dbReference type="GeneID" id="985554"/>
<dbReference type="KEGG" id="lmo:lmo1751"/>
<dbReference type="PATRIC" id="fig|169963.11.peg.1795"/>
<dbReference type="eggNOG" id="COG2265">
    <property type="taxonomic scope" value="Bacteria"/>
</dbReference>
<dbReference type="HOGENOM" id="CLU_014689_7_0_9"/>
<dbReference type="OrthoDB" id="9804590at2"/>
<dbReference type="PhylomeDB" id="Q8Y6D6"/>
<dbReference type="BioCyc" id="LMON169963:LMO1751-MONOMER"/>
<dbReference type="Proteomes" id="UP000000817">
    <property type="component" value="Chromosome"/>
</dbReference>
<dbReference type="GO" id="GO:0051539">
    <property type="term" value="F:4 iron, 4 sulfur cluster binding"/>
    <property type="evidence" value="ECO:0007669"/>
    <property type="project" value="UniProtKB-KW"/>
</dbReference>
<dbReference type="GO" id="GO:0046872">
    <property type="term" value="F:metal ion binding"/>
    <property type="evidence" value="ECO:0007669"/>
    <property type="project" value="UniProtKB-KW"/>
</dbReference>
<dbReference type="GO" id="GO:0070041">
    <property type="term" value="F:rRNA (uridine-C5-)-methyltransferase activity"/>
    <property type="evidence" value="ECO:0000318"/>
    <property type="project" value="GO_Central"/>
</dbReference>
<dbReference type="GO" id="GO:0070475">
    <property type="term" value="P:rRNA base methylation"/>
    <property type="evidence" value="ECO:0000318"/>
    <property type="project" value="GO_Central"/>
</dbReference>
<dbReference type="CDD" id="cd02440">
    <property type="entry name" value="AdoMet_MTases"/>
    <property type="match status" value="1"/>
</dbReference>
<dbReference type="FunFam" id="3.40.50.150:FF:000009">
    <property type="entry name" value="23S rRNA (Uracil(1939)-C(5))-methyltransferase RlmD"/>
    <property type="match status" value="1"/>
</dbReference>
<dbReference type="FunFam" id="2.40.50.140:FF:000097">
    <property type="entry name" value="23S rRNA (uracil(1939)-C(5))-methyltransferase RlmD"/>
    <property type="match status" value="1"/>
</dbReference>
<dbReference type="FunFam" id="2.40.50.1070:FF:000003">
    <property type="entry name" value="23S rRNA (Uracil-5-)-methyltransferase RumA"/>
    <property type="match status" value="1"/>
</dbReference>
<dbReference type="Gene3D" id="2.40.50.1070">
    <property type="match status" value="1"/>
</dbReference>
<dbReference type="Gene3D" id="2.40.50.140">
    <property type="entry name" value="Nucleic acid-binding proteins"/>
    <property type="match status" value="1"/>
</dbReference>
<dbReference type="Gene3D" id="3.40.50.150">
    <property type="entry name" value="Vaccinia Virus protein VP39"/>
    <property type="match status" value="1"/>
</dbReference>
<dbReference type="InterPro" id="IPR030390">
    <property type="entry name" value="MeTrfase_TrmA_AS"/>
</dbReference>
<dbReference type="InterPro" id="IPR030391">
    <property type="entry name" value="MeTrfase_TrmA_CS"/>
</dbReference>
<dbReference type="InterPro" id="IPR012340">
    <property type="entry name" value="NA-bd_OB-fold"/>
</dbReference>
<dbReference type="InterPro" id="IPR029063">
    <property type="entry name" value="SAM-dependent_MTases_sf"/>
</dbReference>
<dbReference type="InterPro" id="IPR002792">
    <property type="entry name" value="TRAM_dom"/>
</dbReference>
<dbReference type="InterPro" id="IPR010280">
    <property type="entry name" value="U5_MeTrfase_fam"/>
</dbReference>
<dbReference type="NCBIfam" id="TIGR00479">
    <property type="entry name" value="rumA"/>
    <property type="match status" value="1"/>
</dbReference>
<dbReference type="PANTHER" id="PTHR11061">
    <property type="entry name" value="RNA M5U METHYLTRANSFERASE"/>
    <property type="match status" value="1"/>
</dbReference>
<dbReference type="PANTHER" id="PTHR11061:SF30">
    <property type="entry name" value="TRNA (URACIL(54)-C(5))-METHYLTRANSFERASE"/>
    <property type="match status" value="1"/>
</dbReference>
<dbReference type="Pfam" id="PF01938">
    <property type="entry name" value="TRAM"/>
    <property type="match status" value="1"/>
</dbReference>
<dbReference type="Pfam" id="PF05958">
    <property type="entry name" value="tRNA_U5-meth_tr"/>
    <property type="match status" value="1"/>
</dbReference>
<dbReference type="SUPFAM" id="SSF50249">
    <property type="entry name" value="Nucleic acid-binding proteins"/>
    <property type="match status" value="1"/>
</dbReference>
<dbReference type="SUPFAM" id="SSF53335">
    <property type="entry name" value="S-adenosyl-L-methionine-dependent methyltransferases"/>
    <property type="match status" value="1"/>
</dbReference>
<dbReference type="PROSITE" id="PS51687">
    <property type="entry name" value="SAM_MT_RNA_M5U"/>
    <property type="match status" value="1"/>
</dbReference>
<dbReference type="PROSITE" id="PS50926">
    <property type="entry name" value="TRAM"/>
    <property type="match status" value="1"/>
</dbReference>
<dbReference type="PROSITE" id="PS01230">
    <property type="entry name" value="TRMA_1"/>
    <property type="match status" value="1"/>
</dbReference>
<dbReference type="PROSITE" id="PS01231">
    <property type="entry name" value="TRMA_2"/>
    <property type="match status" value="1"/>
</dbReference>
<keyword id="KW-0004">4Fe-4S</keyword>
<keyword id="KW-0408">Iron</keyword>
<keyword id="KW-0411">Iron-sulfur</keyword>
<keyword id="KW-0479">Metal-binding</keyword>
<keyword id="KW-0489">Methyltransferase</keyword>
<keyword id="KW-1185">Reference proteome</keyword>
<keyword id="KW-0949">S-adenosyl-L-methionine</keyword>
<keyword id="KW-0808">Transferase</keyword>
<comment type="similarity">
    <text evidence="3">Belongs to the class I-like SAM-binding methyltransferase superfamily. RNA M5U methyltransferase family.</text>
</comment>
<name>Y1751_LISMO</name>
<organism>
    <name type="scientific">Listeria monocytogenes serovar 1/2a (strain ATCC BAA-679 / EGD-e)</name>
    <dbReference type="NCBI Taxonomy" id="169963"/>
    <lineage>
        <taxon>Bacteria</taxon>
        <taxon>Bacillati</taxon>
        <taxon>Bacillota</taxon>
        <taxon>Bacilli</taxon>
        <taxon>Bacillales</taxon>
        <taxon>Listeriaceae</taxon>
        <taxon>Listeria</taxon>
    </lineage>
</organism>
<gene>
    <name type="ordered locus">lmo1751</name>
</gene>
<protein>
    <recommendedName>
        <fullName>Uncharacterized RNA methyltransferase lmo1751</fullName>
        <ecNumber>2.1.1.-</ecNumber>
    </recommendedName>
</protein>
<feature type="chain" id="PRO_0000162002" description="Uncharacterized RNA methyltransferase lmo1751">
    <location>
        <begin position="1"/>
        <end position="453"/>
    </location>
</feature>
<feature type="domain" description="TRAM" evidence="2">
    <location>
        <begin position="5"/>
        <end position="63"/>
    </location>
</feature>
<feature type="active site" description="Nucleophile" evidence="3">
    <location>
        <position position="410"/>
    </location>
</feature>
<feature type="binding site" evidence="1">
    <location>
        <position position="76"/>
    </location>
    <ligand>
        <name>[4Fe-4S] cluster</name>
        <dbReference type="ChEBI" id="CHEBI:49883"/>
    </ligand>
</feature>
<feature type="binding site" evidence="1">
    <location>
        <position position="82"/>
    </location>
    <ligand>
        <name>[4Fe-4S] cluster</name>
        <dbReference type="ChEBI" id="CHEBI:49883"/>
    </ligand>
</feature>
<feature type="binding site" evidence="1">
    <location>
        <position position="85"/>
    </location>
    <ligand>
        <name>[4Fe-4S] cluster</name>
        <dbReference type="ChEBI" id="CHEBI:49883"/>
    </ligand>
</feature>
<feature type="binding site" evidence="1">
    <location>
        <position position="162"/>
    </location>
    <ligand>
        <name>[4Fe-4S] cluster</name>
        <dbReference type="ChEBI" id="CHEBI:49883"/>
    </ligand>
</feature>
<feature type="binding site" evidence="3">
    <location>
        <position position="285"/>
    </location>
    <ligand>
        <name>S-adenosyl-L-methionine</name>
        <dbReference type="ChEBI" id="CHEBI:59789"/>
    </ligand>
</feature>
<feature type="binding site" evidence="3">
    <location>
        <position position="314"/>
    </location>
    <ligand>
        <name>S-adenosyl-L-methionine</name>
        <dbReference type="ChEBI" id="CHEBI:59789"/>
    </ligand>
</feature>
<feature type="binding site" evidence="3">
    <location>
        <position position="335"/>
    </location>
    <ligand>
        <name>S-adenosyl-L-methionine</name>
        <dbReference type="ChEBI" id="CHEBI:59789"/>
    </ligand>
</feature>
<feature type="binding site" evidence="3">
    <location>
        <position position="383"/>
    </location>
    <ligand>
        <name>S-adenosyl-L-methionine</name>
        <dbReference type="ChEBI" id="CHEBI:59789"/>
    </ligand>
</feature>
<accession>Q8Y6D6</accession>